<comment type="function">
    <text>Required for trans-splicing of exons 1 and 2 of the chloroplast encoded psaA mRNA (a group II intron). May be required for stability of the chloroplast RNA-protein complex in which it is found.</text>
</comment>
<comment type="subunit">
    <text>Part of a 1700 kDa complex that includes the precursor RNA to exon 1 and the tscA RNA.</text>
</comment>
<comment type="subcellular location">
    <subcellularLocation>
        <location>Plastid</location>
        <location>Chloroplast stroma</location>
    </subcellularLocation>
</comment>
<comment type="domain">
    <text>The N-terminal 453 amino acids are dispensable, while the C-terminal 630 amino acids are required for function.</text>
</comment>
<feature type="transit peptide" description="Chloroplast" evidence="1">
    <location>
        <begin position="1"/>
        <end position="40"/>
    </location>
</feature>
<feature type="chain" id="PRO_0000022197" description="Trans-splicing factor Raa3, chloroplastic">
    <location>
        <begin position="41"/>
        <end position="1783"/>
    </location>
</feature>
<feature type="domain" description="RAP" evidence="2">
    <location>
        <begin position="1713"/>
        <end position="1772"/>
    </location>
</feature>
<feature type="region of interest" description="Disordered" evidence="3">
    <location>
        <begin position="97"/>
        <end position="378"/>
    </location>
</feature>
<feature type="region of interest" description="Disordered" evidence="3">
    <location>
        <begin position="420"/>
        <end position="484"/>
    </location>
</feature>
<feature type="region of interest" description="Disordered" evidence="3">
    <location>
        <begin position="563"/>
        <end position="610"/>
    </location>
</feature>
<feature type="region of interest" description="Disordered" evidence="3">
    <location>
        <begin position="652"/>
        <end position="709"/>
    </location>
</feature>
<feature type="region of interest" description="Disordered" evidence="3">
    <location>
        <begin position="918"/>
        <end position="971"/>
    </location>
</feature>
<feature type="region of interest" description="Disordered" evidence="3">
    <location>
        <begin position="1395"/>
        <end position="1427"/>
    </location>
</feature>
<feature type="region of interest" description="Disordered" evidence="3">
    <location>
        <begin position="1476"/>
        <end position="1506"/>
    </location>
</feature>
<feature type="region of interest" description="Disordered" evidence="3">
    <location>
        <begin position="1620"/>
        <end position="1639"/>
    </location>
</feature>
<feature type="compositionally biased region" description="Gly residues" evidence="3">
    <location>
        <begin position="105"/>
        <end position="118"/>
    </location>
</feature>
<feature type="compositionally biased region" description="Low complexity" evidence="3">
    <location>
        <begin position="126"/>
        <end position="157"/>
    </location>
</feature>
<feature type="compositionally biased region" description="Low complexity" evidence="3">
    <location>
        <begin position="186"/>
        <end position="205"/>
    </location>
</feature>
<feature type="compositionally biased region" description="Low complexity" evidence="3">
    <location>
        <begin position="224"/>
        <end position="242"/>
    </location>
</feature>
<feature type="compositionally biased region" description="Basic and acidic residues" evidence="3">
    <location>
        <begin position="256"/>
        <end position="273"/>
    </location>
</feature>
<feature type="compositionally biased region" description="Low complexity" evidence="3">
    <location>
        <begin position="277"/>
        <end position="289"/>
    </location>
</feature>
<feature type="compositionally biased region" description="Polar residues" evidence="3">
    <location>
        <begin position="307"/>
        <end position="316"/>
    </location>
</feature>
<feature type="compositionally biased region" description="Low complexity" evidence="3">
    <location>
        <begin position="343"/>
        <end position="374"/>
    </location>
</feature>
<feature type="compositionally biased region" description="Low complexity" evidence="3">
    <location>
        <begin position="420"/>
        <end position="436"/>
    </location>
</feature>
<feature type="compositionally biased region" description="Low complexity" evidence="3">
    <location>
        <begin position="577"/>
        <end position="599"/>
    </location>
</feature>
<feature type="compositionally biased region" description="Low complexity" evidence="3">
    <location>
        <begin position="655"/>
        <end position="669"/>
    </location>
</feature>
<feature type="compositionally biased region" description="Low complexity" evidence="3">
    <location>
        <begin position="676"/>
        <end position="709"/>
    </location>
</feature>
<feature type="compositionally biased region" description="Low complexity" evidence="3">
    <location>
        <begin position="928"/>
        <end position="970"/>
    </location>
</feature>
<feature type="compositionally biased region" description="Low complexity" evidence="3">
    <location>
        <begin position="1403"/>
        <end position="1417"/>
    </location>
</feature>
<feature type="compositionally biased region" description="Basic residues" evidence="3">
    <location>
        <begin position="1494"/>
        <end position="1506"/>
    </location>
</feature>
<feature type="compositionally biased region" description="Basic residues" evidence="3">
    <location>
        <begin position="1620"/>
        <end position="1630"/>
    </location>
</feature>
<protein>
    <recommendedName>
        <fullName>Trans-splicing factor Raa3, chloroplastic</fullName>
    </recommendedName>
</protein>
<gene>
    <name type="primary">RAA3</name>
</gene>
<reference key="1">
    <citation type="journal article" date="2001" name="EMBO J.">
        <title>Identification of an RNA-protein complex involved in chloroplast group II intron trans-splicing in Chlamydomonas reinhardtii.</title>
        <authorList>
            <person name="Rivier C."/>
            <person name="Goldschmidt-Clermont M."/>
            <person name="Rochaix J.-D."/>
        </authorList>
    </citation>
    <scope>NUCLEOTIDE SEQUENCE [GENOMIC DNA / MRNA]</scope>
    <scope>CHARACTERIZATION</scope>
    <source>
        <strain>137c / CC-125</strain>
    </source>
</reference>
<name>RAA3_CHLRE</name>
<evidence type="ECO:0000255" key="1"/>
<evidence type="ECO:0000255" key="2">
    <source>
        <dbReference type="PROSITE-ProRule" id="PRU00619"/>
    </source>
</evidence>
<evidence type="ECO:0000256" key="3">
    <source>
        <dbReference type="SAM" id="MobiDB-lite"/>
    </source>
</evidence>
<dbReference type="EMBL" id="AF310675">
    <property type="protein sequence ID" value="AAG40000.1"/>
    <property type="molecule type" value="Genomic_DNA"/>
</dbReference>
<dbReference type="EMBL" id="AF310674">
    <property type="protein sequence ID" value="AAG39999.1"/>
    <property type="molecule type" value="mRNA"/>
</dbReference>
<dbReference type="SMR" id="Q9FEC4"/>
<dbReference type="PaxDb" id="3055-EDP03491"/>
<dbReference type="GO" id="GO:0009570">
    <property type="term" value="C:chloroplast stroma"/>
    <property type="evidence" value="ECO:0007669"/>
    <property type="project" value="UniProtKB-SubCell"/>
</dbReference>
<dbReference type="GO" id="GO:0006397">
    <property type="term" value="P:mRNA processing"/>
    <property type="evidence" value="ECO:0007669"/>
    <property type="project" value="UniProtKB-KW"/>
</dbReference>
<dbReference type="GO" id="GO:0008380">
    <property type="term" value="P:RNA splicing"/>
    <property type="evidence" value="ECO:0007669"/>
    <property type="project" value="UniProtKB-KW"/>
</dbReference>
<dbReference type="InterPro" id="IPR052886">
    <property type="entry name" value="LCS_TC/CRSF"/>
</dbReference>
<dbReference type="InterPro" id="IPR013584">
    <property type="entry name" value="RAP"/>
</dbReference>
<dbReference type="PANTHER" id="PTHR23261:SF77">
    <property type="entry name" value="GROUND-LIKE DOMAIN-CONTAINING PROTEIN"/>
    <property type="match status" value="1"/>
</dbReference>
<dbReference type="PANTHER" id="PTHR23261">
    <property type="entry name" value="GROUNDHOG-RELATED"/>
    <property type="match status" value="1"/>
</dbReference>
<dbReference type="PROSITE" id="PS51286">
    <property type="entry name" value="RAP"/>
    <property type="match status" value="1"/>
</dbReference>
<proteinExistence type="evidence at protein level"/>
<organism>
    <name type="scientific">Chlamydomonas reinhardtii</name>
    <name type="common">Chlamydomonas smithii</name>
    <dbReference type="NCBI Taxonomy" id="3055"/>
    <lineage>
        <taxon>Eukaryota</taxon>
        <taxon>Viridiplantae</taxon>
        <taxon>Chlorophyta</taxon>
        <taxon>core chlorophytes</taxon>
        <taxon>Chlorophyceae</taxon>
        <taxon>CS clade</taxon>
        <taxon>Chlamydomonadales</taxon>
        <taxon>Chlamydomonadaceae</taxon>
        <taxon>Chlamydomonas</taxon>
    </lineage>
</organism>
<keyword id="KW-0150">Chloroplast</keyword>
<keyword id="KW-0507">mRNA processing</keyword>
<keyword id="KW-0508">mRNA splicing</keyword>
<keyword id="KW-0934">Plastid</keyword>
<keyword id="KW-0809">Transit peptide</keyword>
<sequence length="1783" mass="180401">MKADLATAKGSSPAFSAPRTYRARLLSRCLNKCFNTVLVSGGAAESRFRGGATVGKAGAHDARGVGDLVDFLQQEATPYEVNVPPYLILPPLKSNEATTHRRAGDSGGQGPAAAGGRGQARHGRRQAAASAATTVSAAPQTGATKPAATAKTTPQRPRGSDADAGSRAQSQYGFGDPPGGGALKGAVDAASDAAPDVAAASPAPAGISDQLSTPACPPEREPQAGKPRASGRAPAAPGVGPQDVGGGSGACAPAPDESHMGLTHRDQGHDERISQTAGEAWKAGAVAAPPAAPTPSPPGLAAAPTRLASSALGTHSSDGDMRRAVPGRDTPSLSAVAGPVTLSGSSSSSSGRNSSSNSNTSTSSTSNGVTITSNVGVNGASPQERLMAARRAVVTMQWNTHLGRRGRSFAPLPTGGMSIATSAASSSTSSASSSSSMNDGSNAKKTSDAAVSLPVGQQPAAEQPHVPTAPGGPSQTGASAVAAQAPSSAMPTAAMAATMGSATIGSAATLPTAAVVSSAAAEGTQPSGLLLAGGRPALLGRTIQGRIARLQAAREALRAARHARVGAAMQPPPVQARPVQGQSGQVPQVGQGPVQSQPGRRQEPAASATKLHVADGLPARPVQPAVSATDLQTDTATAASAPFPVSDASLGSTEPLAASAPTTSLASASGPAIGTSSSNAHSSAAASEAAAGTVRAPTDTAAPAASPAATAPALASTPFATPAAAPLPEPPEVVAARDLLGRLSRYQPAGRDDGPAVLAPHARYSPAAYQAAAAAAAAQPQLLLAPLSLPQLAAVVAGYAAAGHRHEPLLEALAGVALAKAGGAGGIGGGAAGAVPRGQAASELKRSRLTFRAACVFLTALARLGYRGGAVTRLAAALAVWLARQLNTGAVTPRAKWKGTWLAAALWAYATLEQLPAAAPTPPPPPASAAAASTAPRAAESRPAAAPAPAEATATRTPLLTAPQLAPQRASASPDLELARGGVLLFTEAAEAVRVAPGWLHLMDGREALWSLWAFRKAAAAYGRGEGTASGAVYVAAAGGYAMLQSGGAGGGGMGQAGGAGRGGAGAGAAALPLVVAAPRYEANPLVELKLADRATSLFPQLDPGQLAEAHVLLLECGLAEDELPQALTALRRCVIARADSIRPQPLAVMVATLAVMQVRDVVWLSALAMACRNKMINMSPDQIVAVLHAFGSVLRFHHLLLFHAAAVVCSCPGMWRLGGMGAGEVLRLVGAFAATRHYEGRLLRAAAERMLQLGSTGSTAGQRAGLLQSLCSLHYRHNGLLRIVVADTFGLADLSPGSAGQPRNMGSSAKLAGAGTAAAAGAAAPGLPPSLLVAVAEACGQLQHRPPGLLQALHASRAAVWPRVGLAQRATLCWALLVLTGGLPAQYLPADRPRDAKRHVRQSAAAAAAAAAAAQDQRQEQHQQHQQEQLLAKALVEYLQALGAGVQRWPPPAPSSYHLQLLVACTVLASCTPPPAPAHMQQQPQSSGTGCQKSRRRRMRYRRSRGAVLQQQLKEELDKLPASAMQRALEVQRRARSAALGGWAHEVASVVREVLQEASVDARADSEGRQPLPPHWLGQPPATLLSAAVSTGVEVCDGAMLVDVAVELEVEAGLPRPQVKGRGRGRRTAARATTDVQGAEQAVVTEEAAYEHSHPLRQRLQLALDLCPLPPPPPRTAAPVLSAAYAPGAGGAGTSATAEVTANRTTGAPRSLAVGAAAGGAVIRNSRWLLSGAGALRRRLLTHAGWLVVPVRERQWKDLRSAEQQRRVVREWLKAVLLHAQQ</sequence>
<accession>Q9FEC4</accession>